<evidence type="ECO:0000255" key="1">
    <source>
        <dbReference type="HAMAP-Rule" id="MF_00003"/>
    </source>
</evidence>
<keyword id="KW-0963">Cytoplasm</keyword>
<keyword id="KW-0690">Ribosome biogenesis</keyword>
<protein>
    <recommendedName>
        <fullName evidence="1">Ribosome-binding factor A</fullName>
    </recommendedName>
</protein>
<name>RBFA_CHLAB</name>
<proteinExistence type="inferred from homology"/>
<accession>Q5L628</accession>
<gene>
    <name evidence="1" type="primary">rbfA</name>
    <name type="ordered locus">CAB450</name>
</gene>
<comment type="function">
    <text evidence="1">One of several proteins that assist in the late maturation steps of the functional core of the 30S ribosomal subunit. Associates with free 30S ribosomal subunits (but not with 30S subunits that are part of 70S ribosomes or polysomes). Required for efficient processing of 16S rRNA. May interact with the 5'-terminal helix region of 16S rRNA.</text>
</comment>
<comment type="subunit">
    <text evidence="1">Monomer. Binds 30S ribosomal subunits, but not 50S ribosomal subunits or 70S ribosomes.</text>
</comment>
<comment type="subcellular location">
    <subcellularLocation>
        <location evidence="1">Cytoplasm</location>
    </subcellularLocation>
</comment>
<comment type="similarity">
    <text evidence="1">Belongs to the RbfA family.</text>
</comment>
<dbReference type="EMBL" id="CR848038">
    <property type="protein sequence ID" value="CAH63903.1"/>
    <property type="molecule type" value="Genomic_DNA"/>
</dbReference>
<dbReference type="RefSeq" id="WP_006344094.1">
    <property type="nucleotide sequence ID" value="NC_004552.2"/>
</dbReference>
<dbReference type="SMR" id="Q5L628"/>
<dbReference type="GeneID" id="93025013"/>
<dbReference type="KEGG" id="cab:CAB450"/>
<dbReference type="eggNOG" id="COG0858">
    <property type="taxonomic scope" value="Bacteria"/>
</dbReference>
<dbReference type="HOGENOM" id="CLU_089475_6_3_0"/>
<dbReference type="OrthoDB" id="21494at2"/>
<dbReference type="Proteomes" id="UP000001012">
    <property type="component" value="Chromosome"/>
</dbReference>
<dbReference type="GO" id="GO:0005829">
    <property type="term" value="C:cytosol"/>
    <property type="evidence" value="ECO:0007669"/>
    <property type="project" value="TreeGrafter"/>
</dbReference>
<dbReference type="GO" id="GO:0043024">
    <property type="term" value="F:ribosomal small subunit binding"/>
    <property type="evidence" value="ECO:0007669"/>
    <property type="project" value="TreeGrafter"/>
</dbReference>
<dbReference type="GO" id="GO:0030490">
    <property type="term" value="P:maturation of SSU-rRNA"/>
    <property type="evidence" value="ECO:0007669"/>
    <property type="project" value="UniProtKB-UniRule"/>
</dbReference>
<dbReference type="Gene3D" id="3.30.300.20">
    <property type="match status" value="1"/>
</dbReference>
<dbReference type="HAMAP" id="MF_00003">
    <property type="entry name" value="RbfA"/>
    <property type="match status" value="1"/>
</dbReference>
<dbReference type="InterPro" id="IPR015946">
    <property type="entry name" value="KH_dom-like_a/b"/>
</dbReference>
<dbReference type="InterPro" id="IPR000238">
    <property type="entry name" value="RbfA"/>
</dbReference>
<dbReference type="InterPro" id="IPR023799">
    <property type="entry name" value="RbfA_dom_sf"/>
</dbReference>
<dbReference type="NCBIfam" id="TIGR00082">
    <property type="entry name" value="rbfA"/>
    <property type="match status" value="1"/>
</dbReference>
<dbReference type="PANTHER" id="PTHR33515">
    <property type="entry name" value="RIBOSOME-BINDING FACTOR A, CHLOROPLASTIC-RELATED"/>
    <property type="match status" value="1"/>
</dbReference>
<dbReference type="PANTHER" id="PTHR33515:SF1">
    <property type="entry name" value="RIBOSOME-BINDING FACTOR A, CHLOROPLASTIC-RELATED"/>
    <property type="match status" value="1"/>
</dbReference>
<dbReference type="Pfam" id="PF02033">
    <property type="entry name" value="RBFA"/>
    <property type="match status" value="1"/>
</dbReference>
<dbReference type="SUPFAM" id="SSF89919">
    <property type="entry name" value="Ribosome-binding factor A, RbfA"/>
    <property type="match status" value="1"/>
</dbReference>
<sequence>MTENRRIKKVNSLLREAIANVILKDVKHPKISNRWITVTRVCLSKDLHSARVYVSIMPHENTSTETLEALKASARYIAYKASKGVVLKYFPEINFYLEDIFSPQDHIENLLWKIREQDKN</sequence>
<feature type="chain" id="PRO_1000000087" description="Ribosome-binding factor A">
    <location>
        <begin position="1"/>
        <end position="120"/>
    </location>
</feature>
<organism>
    <name type="scientific">Chlamydia abortus (strain DSM 27085 / S26/3)</name>
    <name type="common">Chlamydophila abortus</name>
    <dbReference type="NCBI Taxonomy" id="218497"/>
    <lineage>
        <taxon>Bacteria</taxon>
        <taxon>Pseudomonadati</taxon>
        <taxon>Chlamydiota</taxon>
        <taxon>Chlamydiia</taxon>
        <taxon>Chlamydiales</taxon>
        <taxon>Chlamydiaceae</taxon>
        <taxon>Chlamydia/Chlamydophila group</taxon>
        <taxon>Chlamydia</taxon>
    </lineage>
</organism>
<reference key="1">
    <citation type="journal article" date="2005" name="Genome Res.">
        <title>The Chlamydophila abortus genome sequence reveals an array of variable proteins that contribute to interspecies variation.</title>
        <authorList>
            <person name="Thomson N.R."/>
            <person name="Yeats C."/>
            <person name="Bell K."/>
            <person name="Holden M.T.G."/>
            <person name="Bentley S.D."/>
            <person name="Livingstone M."/>
            <person name="Cerdeno-Tarraga A.-M."/>
            <person name="Harris B."/>
            <person name="Doggett J."/>
            <person name="Ormond D."/>
            <person name="Mungall K."/>
            <person name="Clarke K."/>
            <person name="Feltwell T."/>
            <person name="Hance Z."/>
            <person name="Sanders M."/>
            <person name="Quail M.A."/>
            <person name="Price C."/>
            <person name="Barrell B.G."/>
            <person name="Parkhill J."/>
            <person name="Longbottom D."/>
        </authorList>
    </citation>
    <scope>NUCLEOTIDE SEQUENCE [LARGE SCALE GENOMIC DNA]</scope>
    <source>
        <strain>DSM 27085 / S26/3</strain>
    </source>
</reference>